<keyword id="KW-0963">Cytoplasm</keyword>
<keyword id="KW-0460">Magnesium</keyword>
<keyword id="KW-0479">Metal-binding</keyword>
<keyword id="KW-0566">Pantothenate biosynthesis</keyword>
<keyword id="KW-1185">Reference proteome</keyword>
<keyword id="KW-0808">Transferase</keyword>
<sequence>MTYLQESSRPAVTVPKLQAMREAGEKIAMLTSYDASFAALLDRANVDVQLIGDSLGNVLQGQATTLPVTLDDIAYHTACVARAQPRGLVVADLPFGTYGTPADAFASAVKLMRAGAQMVKLEGGEWLAETVRFLVERAVPVCAHVGLTPQSVHAFGGFKVQGKTEAGAAQLLRDARAVEEAGAQLIVLEAVPTLVAAEVTRELSIPTIGIGAGAECSGQVLVLHDMLGVFPGKRPRFVKDFMQGQPSIFAAVEAYVRAVKDGSFPGPEHSF</sequence>
<comment type="function">
    <text evidence="1">Catalyzes the reversible reaction in which hydroxymethyl group from 5,10-methylenetetrahydrofolate is transferred onto alpha-ketoisovalerate to form ketopantoate.</text>
</comment>
<comment type="catalytic activity">
    <reaction evidence="1">
        <text>3-methyl-2-oxobutanoate + (6R)-5,10-methylene-5,6,7,8-tetrahydrofolate + H2O = 2-dehydropantoate + (6S)-5,6,7,8-tetrahydrofolate</text>
        <dbReference type="Rhea" id="RHEA:11824"/>
        <dbReference type="ChEBI" id="CHEBI:11561"/>
        <dbReference type="ChEBI" id="CHEBI:11851"/>
        <dbReference type="ChEBI" id="CHEBI:15377"/>
        <dbReference type="ChEBI" id="CHEBI:15636"/>
        <dbReference type="ChEBI" id="CHEBI:57453"/>
        <dbReference type="EC" id="2.1.2.11"/>
    </reaction>
</comment>
<comment type="cofactor">
    <cofactor evidence="1">
        <name>Mg(2+)</name>
        <dbReference type="ChEBI" id="CHEBI:18420"/>
    </cofactor>
    <text evidence="1">Binds 1 Mg(2+) ion per subunit.</text>
</comment>
<comment type="pathway">
    <text evidence="1">Cofactor biosynthesis; (R)-pantothenate biosynthesis; (R)-pantoate from 3-methyl-2-oxobutanoate: step 1/2.</text>
</comment>
<comment type="subunit">
    <text evidence="1">Homodecamer; pentamer of dimers.</text>
</comment>
<comment type="subcellular location">
    <subcellularLocation>
        <location evidence="1">Cytoplasm</location>
    </subcellularLocation>
</comment>
<comment type="similarity">
    <text evidence="1">Belongs to the PanB family.</text>
</comment>
<organism>
    <name type="scientific">Burkholderia pseudomallei (strain K96243)</name>
    <dbReference type="NCBI Taxonomy" id="272560"/>
    <lineage>
        <taxon>Bacteria</taxon>
        <taxon>Pseudomonadati</taxon>
        <taxon>Pseudomonadota</taxon>
        <taxon>Betaproteobacteria</taxon>
        <taxon>Burkholderiales</taxon>
        <taxon>Burkholderiaceae</taxon>
        <taxon>Burkholderia</taxon>
        <taxon>pseudomallei group</taxon>
    </lineage>
</organism>
<dbReference type="EC" id="2.1.2.11" evidence="1"/>
<dbReference type="EMBL" id="BX571965">
    <property type="protein sequence ID" value="CAH36834.1"/>
    <property type="molecule type" value="Genomic_DNA"/>
</dbReference>
<dbReference type="RefSeq" id="WP_004194137.1">
    <property type="nucleotide sequence ID" value="NZ_CP009538.1"/>
</dbReference>
<dbReference type="RefSeq" id="YP_109419.1">
    <property type="nucleotide sequence ID" value="NC_006350.1"/>
</dbReference>
<dbReference type="SMR" id="Q63R49"/>
<dbReference type="STRING" id="272560.BPSL2824"/>
<dbReference type="GeneID" id="93061412"/>
<dbReference type="KEGG" id="bps:BPSL2824"/>
<dbReference type="PATRIC" id="fig|272560.51.peg.2480"/>
<dbReference type="eggNOG" id="COG0413">
    <property type="taxonomic scope" value="Bacteria"/>
</dbReference>
<dbReference type="UniPathway" id="UPA00028">
    <property type="reaction ID" value="UER00003"/>
</dbReference>
<dbReference type="Proteomes" id="UP000000605">
    <property type="component" value="Chromosome 1"/>
</dbReference>
<dbReference type="GO" id="GO:0005737">
    <property type="term" value="C:cytoplasm"/>
    <property type="evidence" value="ECO:0007669"/>
    <property type="project" value="UniProtKB-SubCell"/>
</dbReference>
<dbReference type="GO" id="GO:0003864">
    <property type="term" value="F:3-methyl-2-oxobutanoate hydroxymethyltransferase activity"/>
    <property type="evidence" value="ECO:0007669"/>
    <property type="project" value="UniProtKB-UniRule"/>
</dbReference>
<dbReference type="GO" id="GO:0000287">
    <property type="term" value="F:magnesium ion binding"/>
    <property type="evidence" value="ECO:0007669"/>
    <property type="project" value="TreeGrafter"/>
</dbReference>
<dbReference type="GO" id="GO:0015940">
    <property type="term" value="P:pantothenate biosynthetic process"/>
    <property type="evidence" value="ECO:0007669"/>
    <property type="project" value="UniProtKB-UniRule"/>
</dbReference>
<dbReference type="CDD" id="cd06557">
    <property type="entry name" value="KPHMT-like"/>
    <property type="match status" value="1"/>
</dbReference>
<dbReference type="FunFam" id="3.20.20.60:FF:000003">
    <property type="entry name" value="3-methyl-2-oxobutanoate hydroxymethyltransferase"/>
    <property type="match status" value="1"/>
</dbReference>
<dbReference type="Gene3D" id="3.20.20.60">
    <property type="entry name" value="Phosphoenolpyruvate-binding domains"/>
    <property type="match status" value="1"/>
</dbReference>
<dbReference type="HAMAP" id="MF_00156">
    <property type="entry name" value="PanB"/>
    <property type="match status" value="1"/>
</dbReference>
<dbReference type="InterPro" id="IPR003700">
    <property type="entry name" value="Pantoate_hydroxy_MeTrfase"/>
</dbReference>
<dbReference type="InterPro" id="IPR015813">
    <property type="entry name" value="Pyrv/PenolPyrv_kinase-like_dom"/>
</dbReference>
<dbReference type="InterPro" id="IPR040442">
    <property type="entry name" value="Pyrv_kinase-like_dom_sf"/>
</dbReference>
<dbReference type="NCBIfam" id="TIGR00222">
    <property type="entry name" value="panB"/>
    <property type="match status" value="1"/>
</dbReference>
<dbReference type="NCBIfam" id="NF001452">
    <property type="entry name" value="PRK00311.1"/>
    <property type="match status" value="1"/>
</dbReference>
<dbReference type="PANTHER" id="PTHR20881">
    <property type="entry name" value="3-METHYL-2-OXOBUTANOATE HYDROXYMETHYLTRANSFERASE"/>
    <property type="match status" value="1"/>
</dbReference>
<dbReference type="PANTHER" id="PTHR20881:SF0">
    <property type="entry name" value="3-METHYL-2-OXOBUTANOATE HYDROXYMETHYLTRANSFERASE"/>
    <property type="match status" value="1"/>
</dbReference>
<dbReference type="Pfam" id="PF02548">
    <property type="entry name" value="Pantoate_transf"/>
    <property type="match status" value="1"/>
</dbReference>
<dbReference type="PIRSF" id="PIRSF000388">
    <property type="entry name" value="Pantoate_hydroxy_MeTrfase"/>
    <property type="match status" value="1"/>
</dbReference>
<dbReference type="SUPFAM" id="SSF51621">
    <property type="entry name" value="Phosphoenolpyruvate/pyruvate domain"/>
    <property type="match status" value="1"/>
</dbReference>
<proteinExistence type="inferred from homology"/>
<gene>
    <name evidence="1" type="primary">panB</name>
    <name type="ordered locus">BPSL2824</name>
</gene>
<reference key="1">
    <citation type="journal article" date="2004" name="Proc. Natl. Acad. Sci. U.S.A.">
        <title>Genomic plasticity of the causative agent of melioidosis, Burkholderia pseudomallei.</title>
        <authorList>
            <person name="Holden M.T.G."/>
            <person name="Titball R.W."/>
            <person name="Peacock S.J."/>
            <person name="Cerdeno-Tarraga A.-M."/>
            <person name="Atkins T."/>
            <person name="Crossman L.C."/>
            <person name="Pitt T."/>
            <person name="Churcher C."/>
            <person name="Mungall K.L."/>
            <person name="Bentley S.D."/>
            <person name="Sebaihia M."/>
            <person name="Thomson N.R."/>
            <person name="Bason N."/>
            <person name="Beacham I.R."/>
            <person name="Brooks K."/>
            <person name="Brown K.A."/>
            <person name="Brown N.F."/>
            <person name="Challis G.L."/>
            <person name="Cherevach I."/>
            <person name="Chillingworth T."/>
            <person name="Cronin A."/>
            <person name="Crossett B."/>
            <person name="Davis P."/>
            <person name="DeShazer D."/>
            <person name="Feltwell T."/>
            <person name="Fraser A."/>
            <person name="Hance Z."/>
            <person name="Hauser H."/>
            <person name="Holroyd S."/>
            <person name="Jagels K."/>
            <person name="Keith K.E."/>
            <person name="Maddison M."/>
            <person name="Moule S."/>
            <person name="Price C."/>
            <person name="Quail M.A."/>
            <person name="Rabbinowitsch E."/>
            <person name="Rutherford K."/>
            <person name="Sanders M."/>
            <person name="Simmonds M."/>
            <person name="Songsivilai S."/>
            <person name="Stevens K."/>
            <person name="Tumapa S."/>
            <person name="Vesaratchavest M."/>
            <person name="Whitehead S."/>
            <person name="Yeats C."/>
            <person name="Barrell B.G."/>
            <person name="Oyston P.C.F."/>
            <person name="Parkhill J."/>
        </authorList>
    </citation>
    <scope>NUCLEOTIDE SEQUENCE [LARGE SCALE GENOMIC DNA]</scope>
    <source>
        <strain>K96243</strain>
    </source>
</reference>
<feature type="chain" id="PRO_0000184831" description="3-methyl-2-oxobutanoate hydroxymethyltransferase">
    <location>
        <begin position="1"/>
        <end position="271"/>
    </location>
</feature>
<feature type="active site" description="Proton acceptor" evidence="1">
    <location>
        <position position="189"/>
    </location>
</feature>
<feature type="binding site" evidence="1">
    <location>
        <begin position="53"/>
        <end position="54"/>
    </location>
    <ligand>
        <name>3-methyl-2-oxobutanoate</name>
        <dbReference type="ChEBI" id="CHEBI:11851"/>
    </ligand>
</feature>
<feature type="binding site" evidence="1">
    <location>
        <position position="53"/>
    </location>
    <ligand>
        <name>Mg(2+)</name>
        <dbReference type="ChEBI" id="CHEBI:18420"/>
    </ligand>
</feature>
<feature type="binding site" evidence="1">
    <location>
        <position position="92"/>
    </location>
    <ligand>
        <name>3-methyl-2-oxobutanoate</name>
        <dbReference type="ChEBI" id="CHEBI:11851"/>
    </ligand>
</feature>
<feature type="binding site" evidence="1">
    <location>
        <position position="92"/>
    </location>
    <ligand>
        <name>Mg(2+)</name>
        <dbReference type="ChEBI" id="CHEBI:18420"/>
    </ligand>
</feature>
<feature type="binding site" evidence="1">
    <location>
        <position position="120"/>
    </location>
    <ligand>
        <name>3-methyl-2-oxobutanoate</name>
        <dbReference type="ChEBI" id="CHEBI:11851"/>
    </ligand>
</feature>
<feature type="binding site" evidence="1">
    <location>
        <position position="122"/>
    </location>
    <ligand>
        <name>Mg(2+)</name>
        <dbReference type="ChEBI" id="CHEBI:18420"/>
    </ligand>
</feature>
<name>PANB_BURPS</name>
<evidence type="ECO:0000255" key="1">
    <source>
        <dbReference type="HAMAP-Rule" id="MF_00156"/>
    </source>
</evidence>
<protein>
    <recommendedName>
        <fullName evidence="1">3-methyl-2-oxobutanoate hydroxymethyltransferase</fullName>
        <ecNumber evidence="1">2.1.2.11</ecNumber>
    </recommendedName>
    <alternativeName>
        <fullName evidence="1">Ketopantoate hydroxymethyltransferase</fullName>
        <shortName evidence="1">KPHMT</shortName>
    </alternativeName>
</protein>
<accession>Q63R49</accession>